<feature type="chain" id="PRO_1000002193" description="DNA-directed RNA polymerase subunit Rpo5">
    <location>
        <begin position="1"/>
        <end position="78"/>
    </location>
</feature>
<name>RPO5_METM7</name>
<evidence type="ECO:0000255" key="1">
    <source>
        <dbReference type="HAMAP-Rule" id="MF_00025"/>
    </source>
</evidence>
<reference key="1">
    <citation type="submission" date="2007-06" db="EMBL/GenBank/DDBJ databases">
        <title>Complete sequence of Methanococcus maripaludis C7.</title>
        <authorList>
            <consortium name="US DOE Joint Genome Institute"/>
            <person name="Copeland A."/>
            <person name="Lucas S."/>
            <person name="Lapidus A."/>
            <person name="Barry K."/>
            <person name="Glavina del Rio T."/>
            <person name="Dalin E."/>
            <person name="Tice H."/>
            <person name="Pitluck S."/>
            <person name="Clum A."/>
            <person name="Schmutz J."/>
            <person name="Larimer F."/>
            <person name="Land M."/>
            <person name="Hauser L."/>
            <person name="Kyrpides N."/>
            <person name="Anderson I."/>
            <person name="Sieprawska-Lupa M."/>
            <person name="Whitman W.B."/>
            <person name="Richardson P."/>
        </authorList>
    </citation>
    <scope>NUCLEOTIDE SEQUENCE [LARGE SCALE GENOMIC DNA]</scope>
    <source>
        <strain>C7 / ATCC BAA-1331</strain>
    </source>
</reference>
<sequence length="78" mass="8727">MKVSSHAMVPTHEIIPREEIPLLLEKYNIKLQQLPKLLDTDPLVLEVEAAPGDVLKITRMSPTAGESTYYRLVIATSL</sequence>
<gene>
    <name evidence="1" type="primary">rpo5</name>
    <name evidence="1" type="synonym">rpoH</name>
    <name type="ordered locus">MmarC7_0605</name>
</gene>
<dbReference type="EC" id="2.7.7.6" evidence="1"/>
<dbReference type="EMBL" id="CP000745">
    <property type="protein sequence ID" value="ABR65672.1"/>
    <property type="molecule type" value="Genomic_DNA"/>
</dbReference>
<dbReference type="SMR" id="A6VGU6"/>
<dbReference type="STRING" id="426368.MmarC7_0605"/>
<dbReference type="KEGG" id="mmz:MmarC7_0605"/>
<dbReference type="eggNOG" id="arCOG04258">
    <property type="taxonomic scope" value="Archaea"/>
</dbReference>
<dbReference type="HOGENOM" id="CLU_058320_4_0_2"/>
<dbReference type="OrthoDB" id="30537at2157"/>
<dbReference type="GO" id="GO:0005737">
    <property type="term" value="C:cytoplasm"/>
    <property type="evidence" value="ECO:0007669"/>
    <property type="project" value="UniProtKB-SubCell"/>
</dbReference>
<dbReference type="GO" id="GO:0000428">
    <property type="term" value="C:DNA-directed RNA polymerase complex"/>
    <property type="evidence" value="ECO:0007669"/>
    <property type="project" value="UniProtKB-KW"/>
</dbReference>
<dbReference type="GO" id="GO:0003677">
    <property type="term" value="F:DNA binding"/>
    <property type="evidence" value="ECO:0007669"/>
    <property type="project" value="InterPro"/>
</dbReference>
<dbReference type="GO" id="GO:0003899">
    <property type="term" value="F:DNA-directed RNA polymerase activity"/>
    <property type="evidence" value="ECO:0007669"/>
    <property type="project" value="UniProtKB-UniRule"/>
</dbReference>
<dbReference type="GO" id="GO:0006366">
    <property type="term" value="P:transcription by RNA polymerase II"/>
    <property type="evidence" value="ECO:0007669"/>
    <property type="project" value="TreeGrafter"/>
</dbReference>
<dbReference type="GO" id="GO:0006362">
    <property type="term" value="P:transcription elongation by RNA polymerase I"/>
    <property type="evidence" value="ECO:0007669"/>
    <property type="project" value="TreeGrafter"/>
</dbReference>
<dbReference type="GO" id="GO:0042797">
    <property type="term" value="P:tRNA transcription by RNA polymerase III"/>
    <property type="evidence" value="ECO:0007669"/>
    <property type="project" value="TreeGrafter"/>
</dbReference>
<dbReference type="Gene3D" id="3.90.940.20">
    <property type="entry name" value="RPB5-like RNA polymerase subunit"/>
    <property type="match status" value="1"/>
</dbReference>
<dbReference type="HAMAP" id="MF_00025">
    <property type="entry name" value="RNApol_Rpo5_RPB5"/>
    <property type="match status" value="1"/>
</dbReference>
<dbReference type="InterPro" id="IPR014381">
    <property type="entry name" value="Arch_Rpo5/euc_Rpb5"/>
</dbReference>
<dbReference type="InterPro" id="IPR000783">
    <property type="entry name" value="RNA_pol_subH/Rpb5_C"/>
</dbReference>
<dbReference type="InterPro" id="IPR035913">
    <property type="entry name" value="RPB5-like_sf"/>
</dbReference>
<dbReference type="NCBIfam" id="NF007129">
    <property type="entry name" value="PRK09570.1"/>
    <property type="match status" value="1"/>
</dbReference>
<dbReference type="PANTHER" id="PTHR10535">
    <property type="entry name" value="DNA-DIRECTED RNA POLYMERASES I, II, AND III SUBUNIT RPABC1"/>
    <property type="match status" value="1"/>
</dbReference>
<dbReference type="PANTHER" id="PTHR10535:SF0">
    <property type="entry name" value="DNA-DIRECTED RNA POLYMERASES I, II, AND III SUBUNIT RPABC1"/>
    <property type="match status" value="1"/>
</dbReference>
<dbReference type="Pfam" id="PF01191">
    <property type="entry name" value="RNA_pol_Rpb5_C"/>
    <property type="match status" value="1"/>
</dbReference>
<dbReference type="SUPFAM" id="SSF55287">
    <property type="entry name" value="RPB5-like RNA polymerase subunit"/>
    <property type="match status" value="1"/>
</dbReference>
<keyword id="KW-0963">Cytoplasm</keyword>
<keyword id="KW-0240">DNA-directed RNA polymerase</keyword>
<keyword id="KW-0548">Nucleotidyltransferase</keyword>
<keyword id="KW-0804">Transcription</keyword>
<keyword id="KW-0808">Transferase</keyword>
<proteinExistence type="inferred from homology"/>
<comment type="function">
    <text evidence="1">DNA-dependent RNA polymerase (RNAP) catalyzes the transcription of DNA into RNA using the four ribonucleoside triphosphates as substrates.</text>
</comment>
<comment type="catalytic activity">
    <reaction evidence="1">
        <text>RNA(n) + a ribonucleoside 5'-triphosphate = RNA(n+1) + diphosphate</text>
        <dbReference type="Rhea" id="RHEA:21248"/>
        <dbReference type="Rhea" id="RHEA-COMP:14527"/>
        <dbReference type="Rhea" id="RHEA-COMP:17342"/>
        <dbReference type="ChEBI" id="CHEBI:33019"/>
        <dbReference type="ChEBI" id="CHEBI:61557"/>
        <dbReference type="ChEBI" id="CHEBI:140395"/>
        <dbReference type="EC" id="2.7.7.6"/>
    </reaction>
</comment>
<comment type="subunit">
    <text evidence="1">Part of the RNA polymerase complex.</text>
</comment>
<comment type="subcellular location">
    <subcellularLocation>
        <location evidence="1">Cytoplasm</location>
    </subcellularLocation>
</comment>
<comment type="similarity">
    <text evidence="1">Belongs to the archaeal Rpo5/eukaryotic RPB5 RNA polymerase subunit family.</text>
</comment>
<protein>
    <recommendedName>
        <fullName evidence="1">DNA-directed RNA polymerase subunit Rpo5</fullName>
        <ecNumber evidence="1">2.7.7.6</ecNumber>
    </recommendedName>
    <alternativeName>
        <fullName evidence="1">DNA-directed RNA polymerase subunit H</fullName>
    </alternativeName>
</protein>
<accession>A6VGU6</accession>
<organism>
    <name type="scientific">Methanococcus maripaludis (strain C7 / ATCC BAA-1331)</name>
    <dbReference type="NCBI Taxonomy" id="426368"/>
    <lineage>
        <taxon>Archaea</taxon>
        <taxon>Methanobacteriati</taxon>
        <taxon>Methanobacteriota</taxon>
        <taxon>Methanomada group</taxon>
        <taxon>Methanococci</taxon>
        <taxon>Methanococcales</taxon>
        <taxon>Methanococcaceae</taxon>
        <taxon>Methanococcus</taxon>
    </lineage>
</organism>